<evidence type="ECO:0000255" key="1">
    <source>
        <dbReference type="HAMAP-Rule" id="MF_00425"/>
    </source>
</evidence>
<evidence type="ECO:0000305" key="2"/>
<reference key="1">
    <citation type="journal article" date="2003" name="Genome Res.">
        <title>Comparative genome analysis of Vibrio vulnificus, a marine pathogen.</title>
        <authorList>
            <person name="Chen C.-Y."/>
            <person name="Wu K.-M."/>
            <person name="Chang Y.-C."/>
            <person name="Chang C.-H."/>
            <person name="Tsai H.-C."/>
            <person name="Liao T.-L."/>
            <person name="Liu Y.-M."/>
            <person name="Chen H.-J."/>
            <person name="Shen A.B.-T."/>
            <person name="Li J.-C."/>
            <person name="Su T.-L."/>
            <person name="Shao C.-P."/>
            <person name="Lee C.-T."/>
            <person name="Hor L.-I."/>
            <person name="Tsai S.-F."/>
        </authorList>
    </citation>
    <scope>NUCLEOTIDE SEQUENCE [LARGE SCALE GENOMIC DNA]</scope>
    <source>
        <strain>YJ016</strain>
    </source>
</reference>
<sequence length="446" mass="48538">MITIKKGLDLPIAGAPSQVINDGKSITKVALLGEEYVGMRPTMHVRVGDEVKKAQVLFEDKKNPGVKFTSPVSGKVIEVNRGAKRVLQSVVIEVAGDEQVTFDKFEASQLAGLDREVIKTQLVESGLWTALRTRPFSKVPAIESTTKAIFVTAMDTNPLAAKPELIINEQAEAFVAGLDVLSALTEEKVYVCKSGTSLPRSSQSNVEEHVFDGPHPAGLAGTHMHFLYPVNANNVAWSINYQDVIAFGQLFLTGELFTDRVVSLAGPVVNNPRLVRTIMGASLDELTDSEMMPGEVRVISGSVLTGTHATGPHAYLGRYHLQVSVLREGRDKELFGWATPGKNKFSVTRSFLGHLFKGQLFNMTTTTNGSDRAMVPIGNYERVVPLDMEPTLLLRDLCAGDTDSAQALGALELDEEDLALCTFVCPGKYEYGQLLRDCLNTIEKEG</sequence>
<feature type="chain" id="PRO_0000214209" description="Na(+)-translocating NADH-quinone reductase subunit A">
    <location>
        <begin position="1"/>
        <end position="446"/>
    </location>
</feature>
<comment type="function">
    <text evidence="1">NQR complex catalyzes the reduction of ubiquinone-1 to ubiquinol by two successive reactions, coupled with the transport of Na(+) ions from the cytoplasm to the periplasm. NqrA to NqrE are probably involved in the second step, the conversion of ubisemiquinone to ubiquinol.</text>
</comment>
<comment type="catalytic activity">
    <reaction evidence="1">
        <text>a ubiquinone + n Na(+)(in) + NADH + H(+) = a ubiquinol + n Na(+)(out) + NAD(+)</text>
        <dbReference type="Rhea" id="RHEA:47748"/>
        <dbReference type="Rhea" id="RHEA-COMP:9565"/>
        <dbReference type="Rhea" id="RHEA-COMP:9566"/>
        <dbReference type="ChEBI" id="CHEBI:15378"/>
        <dbReference type="ChEBI" id="CHEBI:16389"/>
        <dbReference type="ChEBI" id="CHEBI:17976"/>
        <dbReference type="ChEBI" id="CHEBI:29101"/>
        <dbReference type="ChEBI" id="CHEBI:57540"/>
        <dbReference type="ChEBI" id="CHEBI:57945"/>
        <dbReference type="EC" id="7.2.1.1"/>
    </reaction>
</comment>
<comment type="subunit">
    <text evidence="1">Composed of six subunits; NqrA, NqrB, NqrC, NqrD, NqrE and NqrF.</text>
</comment>
<comment type="similarity">
    <text evidence="1">Belongs to the NqrA family.</text>
</comment>
<comment type="sequence caution" evidence="2">
    <conflict type="erroneous initiation">
        <sequence resource="EMBL-CDS" id="BAC95354"/>
    </conflict>
</comment>
<accession>Q7MIC7</accession>
<organism>
    <name type="scientific">Vibrio vulnificus (strain YJ016)</name>
    <dbReference type="NCBI Taxonomy" id="196600"/>
    <lineage>
        <taxon>Bacteria</taxon>
        <taxon>Pseudomonadati</taxon>
        <taxon>Pseudomonadota</taxon>
        <taxon>Gammaproteobacteria</taxon>
        <taxon>Vibrionales</taxon>
        <taxon>Vibrionaceae</taxon>
        <taxon>Vibrio</taxon>
    </lineage>
</organism>
<protein>
    <recommendedName>
        <fullName evidence="1">Na(+)-translocating NADH-quinone reductase subunit A</fullName>
        <shortName evidence="1">Na(+)-NQR subunit A</shortName>
        <shortName evidence="1">Na(+)-translocating NQR subunit A</shortName>
        <ecNumber evidence="1">7.2.1.1</ecNumber>
    </recommendedName>
    <alternativeName>
        <fullName evidence="1">NQR complex subunit A</fullName>
    </alternativeName>
    <alternativeName>
        <fullName evidence="1">NQR-1 subunit A</fullName>
    </alternativeName>
</protein>
<gene>
    <name evidence="1" type="primary">nqrA</name>
    <name type="ordered locus">VV2590</name>
</gene>
<dbReference type="EC" id="7.2.1.1" evidence="1"/>
<dbReference type="EMBL" id="BA000037">
    <property type="protein sequence ID" value="BAC95354.1"/>
    <property type="status" value="ALT_INIT"/>
    <property type="molecule type" value="Genomic_DNA"/>
</dbReference>
<dbReference type="RefSeq" id="WP_011079727.1">
    <property type="nucleotide sequence ID" value="NC_005139.1"/>
</dbReference>
<dbReference type="SMR" id="Q7MIC7"/>
<dbReference type="STRING" id="672.VV93_v1c23080"/>
<dbReference type="KEGG" id="vvy:VV2590"/>
<dbReference type="eggNOG" id="COG1726">
    <property type="taxonomic scope" value="Bacteria"/>
</dbReference>
<dbReference type="HOGENOM" id="CLU_046656_0_0_6"/>
<dbReference type="Proteomes" id="UP000002675">
    <property type="component" value="Chromosome I"/>
</dbReference>
<dbReference type="GO" id="GO:0016655">
    <property type="term" value="F:oxidoreductase activity, acting on NAD(P)H, quinone or similar compound as acceptor"/>
    <property type="evidence" value="ECO:0007669"/>
    <property type="project" value="UniProtKB-UniRule"/>
</dbReference>
<dbReference type="GO" id="GO:0006814">
    <property type="term" value="P:sodium ion transport"/>
    <property type="evidence" value="ECO:0007669"/>
    <property type="project" value="UniProtKB-UniRule"/>
</dbReference>
<dbReference type="HAMAP" id="MF_00425">
    <property type="entry name" value="NqrA"/>
    <property type="match status" value="1"/>
</dbReference>
<dbReference type="InterPro" id="IPR008703">
    <property type="entry name" value="NqrA"/>
</dbReference>
<dbReference type="InterPro" id="IPR056148">
    <property type="entry name" value="NQRA_2nd"/>
</dbReference>
<dbReference type="InterPro" id="IPR022615">
    <property type="entry name" value="NqrA_C_domain"/>
</dbReference>
<dbReference type="InterPro" id="IPR056147">
    <property type="entry name" value="NQRA_N"/>
</dbReference>
<dbReference type="NCBIfam" id="TIGR01936">
    <property type="entry name" value="nqrA"/>
    <property type="match status" value="1"/>
</dbReference>
<dbReference type="NCBIfam" id="NF003759">
    <property type="entry name" value="PRK05352.1-2"/>
    <property type="match status" value="1"/>
</dbReference>
<dbReference type="PANTHER" id="PTHR37839">
    <property type="entry name" value="NA(+)-TRANSLOCATING NADH-QUINONE REDUCTASE SUBUNIT A"/>
    <property type="match status" value="1"/>
</dbReference>
<dbReference type="PANTHER" id="PTHR37839:SF1">
    <property type="entry name" value="NA(+)-TRANSLOCATING NADH-QUINONE REDUCTASE SUBUNIT A"/>
    <property type="match status" value="1"/>
</dbReference>
<dbReference type="Pfam" id="PF24836">
    <property type="entry name" value="NQRA_2nd"/>
    <property type="match status" value="1"/>
</dbReference>
<dbReference type="Pfam" id="PF05896">
    <property type="entry name" value="NQRA_N"/>
    <property type="match status" value="1"/>
</dbReference>
<dbReference type="Pfam" id="PF11973">
    <property type="entry name" value="NQRA_SLBB"/>
    <property type="match status" value="1"/>
</dbReference>
<proteinExistence type="inferred from homology"/>
<name>NQRA_VIBVY</name>
<keyword id="KW-0406">Ion transport</keyword>
<keyword id="KW-0520">NAD</keyword>
<keyword id="KW-0915">Sodium</keyword>
<keyword id="KW-0739">Sodium transport</keyword>
<keyword id="KW-1278">Translocase</keyword>
<keyword id="KW-0813">Transport</keyword>
<keyword id="KW-0830">Ubiquinone</keyword>